<feature type="chain" id="PRO_0000416077" description="Epoxyqueuosine reductase">
    <location>
        <begin position="1"/>
        <end position="361"/>
    </location>
</feature>
<feature type="domain" description="4Fe-4S ferredoxin-type" evidence="1">
    <location>
        <begin position="193"/>
        <end position="222"/>
    </location>
</feature>
<feature type="active site" description="Proton donor" evidence="1">
    <location>
        <position position="147"/>
    </location>
</feature>
<feature type="binding site" evidence="1">
    <location>
        <position position="202"/>
    </location>
    <ligand>
        <name>[4Fe-4S] cluster</name>
        <dbReference type="ChEBI" id="CHEBI:49883"/>
        <label>1</label>
    </ligand>
</feature>
<feature type="binding site" evidence="1">
    <location>
        <position position="205"/>
    </location>
    <ligand>
        <name>[4Fe-4S] cluster</name>
        <dbReference type="ChEBI" id="CHEBI:49883"/>
        <label>1</label>
    </ligand>
</feature>
<feature type="binding site" evidence="1">
    <location>
        <position position="208"/>
    </location>
    <ligand>
        <name>[4Fe-4S] cluster</name>
        <dbReference type="ChEBI" id="CHEBI:49883"/>
        <label>1</label>
    </ligand>
</feature>
<feature type="binding site" evidence="1">
    <location>
        <position position="212"/>
    </location>
    <ligand>
        <name>[4Fe-4S] cluster</name>
        <dbReference type="ChEBI" id="CHEBI:49883"/>
        <label>2</label>
    </ligand>
</feature>
<feature type="binding site" evidence="1">
    <location>
        <position position="228"/>
    </location>
    <ligand>
        <name>[4Fe-4S] cluster</name>
        <dbReference type="ChEBI" id="CHEBI:49883"/>
        <label>2</label>
    </ligand>
</feature>
<feature type="binding site" evidence="1">
    <location>
        <position position="255"/>
    </location>
    <ligand>
        <name>[4Fe-4S] cluster</name>
        <dbReference type="ChEBI" id="CHEBI:49883"/>
        <label>2</label>
    </ligand>
</feature>
<feature type="binding site" evidence="1">
    <location>
        <position position="258"/>
    </location>
    <ligand>
        <name>[4Fe-4S] cluster</name>
        <dbReference type="ChEBI" id="CHEBI:49883"/>
        <label>2</label>
    </ligand>
</feature>
<feature type="binding site" evidence="1">
    <location>
        <position position="262"/>
    </location>
    <ligand>
        <name>[4Fe-4S] cluster</name>
        <dbReference type="ChEBI" id="CHEBI:49883"/>
        <label>1</label>
    </ligand>
</feature>
<reference key="1">
    <citation type="journal article" date="2000" name="Nature">
        <title>Complete genome sequence of Pseudomonas aeruginosa PAO1, an opportunistic pathogen.</title>
        <authorList>
            <person name="Stover C.K."/>
            <person name="Pham X.-Q.T."/>
            <person name="Erwin A.L."/>
            <person name="Mizoguchi S.D."/>
            <person name="Warrener P."/>
            <person name="Hickey M.J."/>
            <person name="Brinkman F.S.L."/>
            <person name="Hufnagle W.O."/>
            <person name="Kowalik D.J."/>
            <person name="Lagrou M."/>
            <person name="Garber R.L."/>
            <person name="Goltry L."/>
            <person name="Tolentino E."/>
            <person name="Westbrock-Wadman S."/>
            <person name="Yuan Y."/>
            <person name="Brody L.L."/>
            <person name="Coulter S.N."/>
            <person name="Folger K.R."/>
            <person name="Kas A."/>
            <person name="Larbig K."/>
            <person name="Lim R.M."/>
            <person name="Smith K.A."/>
            <person name="Spencer D.H."/>
            <person name="Wong G.K.-S."/>
            <person name="Wu Z."/>
            <person name="Paulsen I.T."/>
            <person name="Reizer J."/>
            <person name="Saier M.H. Jr."/>
            <person name="Hancock R.E.W."/>
            <person name="Lory S."/>
            <person name="Olson M.V."/>
        </authorList>
    </citation>
    <scope>NUCLEOTIDE SEQUENCE [LARGE SCALE GENOMIC DNA]</scope>
    <source>
        <strain>ATCC 15692 / DSM 22644 / CIP 104116 / JCM 14847 / LMG 12228 / 1C / PRS 101 / PAO1</strain>
    </source>
</reference>
<gene>
    <name evidence="1" type="primary">queG</name>
    <name type="ordered locus">PA4950</name>
</gene>
<evidence type="ECO:0000255" key="1">
    <source>
        <dbReference type="HAMAP-Rule" id="MF_00916"/>
    </source>
</evidence>
<accession>Q9HUL4</accession>
<dbReference type="EC" id="1.17.99.6" evidence="1"/>
<dbReference type="EMBL" id="AE004091">
    <property type="protein sequence ID" value="AAG08335.1"/>
    <property type="molecule type" value="Genomic_DNA"/>
</dbReference>
<dbReference type="PIR" id="D83026">
    <property type="entry name" value="D83026"/>
</dbReference>
<dbReference type="RefSeq" id="NP_253637.1">
    <property type="nucleotide sequence ID" value="NC_002516.2"/>
</dbReference>
<dbReference type="RefSeq" id="WP_003110324.1">
    <property type="nucleotide sequence ID" value="NZ_QZGE01000002.1"/>
</dbReference>
<dbReference type="SMR" id="Q9HUL4"/>
<dbReference type="FunCoup" id="Q9HUL4">
    <property type="interactions" value="252"/>
</dbReference>
<dbReference type="STRING" id="208964.PA4950"/>
<dbReference type="PaxDb" id="208964-PA4950"/>
<dbReference type="DNASU" id="878204"/>
<dbReference type="GeneID" id="878204"/>
<dbReference type="KEGG" id="pae:PA4950"/>
<dbReference type="PATRIC" id="fig|208964.12.peg.5183"/>
<dbReference type="PseudoCAP" id="PA4950"/>
<dbReference type="HOGENOM" id="CLU_030790_0_1_6"/>
<dbReference type="InParanoid" id="Q9HUL4"/>
<dbReference type="OrthoDB" id="9784571at2"/>
<dbReference type="PhylomeDB" id="Q9HUL4"/>
<dbReference type="BioCyc" id="PAER208964:G1FZ6-5066-MONOMER"/>
<dbReference type="UniPathway" id="UPA00392"/>
<dbReference type="Proteomes" id="UP000002438">
    <property type="component" value="Chromosome"/>
</dbReference>
<dbReference type="GO" id="GO:0005737">
    <property type="term" value="C:cytoplasm"/>
    <property type="evidence" value="ECO:0007669"/>
    <property type="project" value="UniProtKB-SubCell"/>
</dbReference>
<dbReference type="GO" id="GO:0051539">
    <property type="term" value="F:4 iron, 4 sulfur cluster binding"/>
    <property type="evidence" value="ECO:0007669"/>
    <property type="project" value="UniProtKB-KW"/>
</dbReference>
<dbReference type="GO" id="GO:0052693">
    <property type="term" value="F:epoxyqueuosine reductase activity"/>
    <property type="evidence" value="ECO:0000318"/>
    <property type="project" value="GO_Central"/>
</dbReference>
<dbReference type="GO" id="GO:0046872">
    <property type="term" value="F:metal ion binding"/>
    <property type="evidence" value="ECO:0007669"/>
    <property type="project" value="UniProtKB-KW"/>
</dbReference>
<dbReference type="GO" id="GO:0008616">
    <property type="term" value="P:queuosine biosynthetic process"/>
    <property type="evidence" value="ECO:0000318"/>
    <property type="project" value="GO_Central"/>
</dbReference>
<dbReference type="GO" id="GO:0006400">
    <property type="term" value="P:tRNA modification"/>
    <property type="evidence" value="ECO:0007669"/>
    <property type="project" value="UniProtKB-UniRule"/>
</dbReference>
<dbReference type="FunFam" id="3.30.70.20:FF:000017">
    <property type="entry name" value="Epoxyqueuosine reductase"/>
    <property type="match status" value="1"/>
</dbReference>
<dbReference type="Gene3D" id="3.30.70.20">
    <property type="match status" value="1"/>
</dbReference>
<dbReference type="HAMAP" id="MF_00916">
    <property type="entry name" value="QueG"/>
    <property type="match status" value="1"/>
</dbReference>
<dbReference type="InterPro" id="IPR017896">
    <property type="entry name" value="4Fe4S_Fe-S-bd"/>
</dbReference>
<dbReference type="InterPro" id="IPR017900">
    <property type="entry name" value="4Fe4S_Fe_S_CS"/>
</dbReference>
<dbReference type="InterPro" id="IPR004453">
    <property type="entry name" value="QueG"/>
</dbReference>
<dbReference type="InterPro" id="IPR013542">
    <property type="entry name" value="QueG_DUF1730"/>
</dbReference>
<dbReference type="NCBIfam" id="TIGR00276">
    <property type="entry name" value="tRNA epoxyqueuosine(34) reductase QueG"/>
    <property type="match status" value="1"/>
</dbReference>
<dbReference type="PANTHER" id="PTHR30002">
    <property type="entry name" value="EPOXYQUEUOSINE REDUCTASE"/>
    <property type="match status" value="1"/>
</dbReference>
<dbReference type="PANTHER" id="PTHR30002:SF4">
    <property type="entry name" value="EPOXYQUEUOSINE REDUCTASE"/>
    <property type="match status" value="1"/>
</dbReference>
<dbReference type="Pfam" id="PF13484">
    <property type="entry name" value="Fer4_16"/>
    <property type="match status" value="1"/>
</dbReference>
<dbReference type="Pfam" id="PF08331">
    <property type="entry name" value="QueG_DUF1730"/>
    <property type="match status" value="1"/>
</dbReference>
<dbReference type="SUPFAM" id="SSF46548">
    <property type="entry name" value="alpha-helical ferredoxin"/>
    <property type="match status" value="1"/>
</dbReference>
<dbReference type="PROSITE" id="PS00198">
    <property type="entry name" value="4FE4S_FER_1"/>
    <property type="match status" value="1"/>
</dbReference>
<dbReference type="PROSITE" id="PS51379">
    <property type="entry name" value="4FE4S_FER_2"/>
    <property type="match status" value="1"/>
</dbReference>
<keyword id="KW-0004">4Fe-4S</keyword>
<keyword id="KW-0963">Cytoplasm</keyword>
<keyword id="KW-0408">Iron</keyword>
<keyword id="KW-0411">Iron-sulfur</keyword>
<keyword id="KW-0479">Metal-binding</keyword>
<keyword id="KW-0560">Oxidoreductase</keyword>
<keyword id="KW-0671">Queuosine biosynthesis</keyword>
<keyword id="KW-1185">Reference proteome</keyword>
<keyword id="KW-0819">tRNA processing</keyword>
<name>QUEG_PSEAE</name>
<proteinExistence type="inferred from homology"/>
<protein>
    <recommendedName>
        <fullName evidence="1">Epoxyqueuosine reductase</fullName>
        <ecNumber evidence="1">1.17.99.6</ecNumber>
    </recommendedName>
    <alternativeName>
        <fullName evidence="1">Queuosine biosynthesis protein QueG</fullName>
    </alternativeName>
</protein>
<comment type="function">
    <text evidence="1">Catalyzes the conversion of epoxyqueuosine (oQ) to queuosine (Q), which is a hypermodified base found in the wobble positions of tRNA(Asp), tRNA(Asn), tRNA(His) and tRNA(Tyr).</text>
</comment>
<comment type="catalytic activity">
    <reaction evidence="1">
        <text>epoxyqueuosine(34) in tRNA + AH2 = queuosine(34) in tRNA + A + H2O</text>
        <dbReference type="Rhea" id="RHEA:32159"/>
        <dbReference type="Rhea" id="RHEA-COMP:18571"/>
        <dbReference type="Rhea" id="RHEA-COMP:18582"/>
        <dbReference type="ChEBI" id="CHEBI:13193"/>
        <dbReference type="ChEBI" id="CHEBI:15377"/>
        <dbReference type="ChEBI" id="CHEBI:17499"/>
        <dbReference type="ChEBI" id="CHEBI:194431"/>
        <dbReference type="ChEBI" id="CHEBI:194443"/>
        <dbReference type="EC" id="1.17.99.6"/>
    </reaction>
</comment>
<comment type="cofactor">
    <cofactor evidence="1">
        <name>cob(II)alamin</name>
        <dbReference type="ChEBI" id="CHEBI:16304"/>
    </cofactor>
</comment>
<comment type="cofactor">
    <cofactor evidence="1">
        <name>[4Fe-4S] cluster</name>
        <dbReference type="ChEBI" id="CHEBI:49883"/>
    </cofactor>
    <text evidence="1">Binds 2 [4Fe-4S] clusters per monomer.</text>
</comment>
<comment type="pathway">
    <text evidence="1">tRNA modification; tRNA-queuosine biosynthesis.</text>
</comment>
<comment type="subunit">
    <text evidence="1">Monomer.</text>
</comment>
<comment type="subcellular location">
    <subcellularLocation>
        <location evidence="1">Cytoplasm</location>
    </subcellularLocation>
</comment>
<comment type="similarity">
    <text evidence="1">Belongs to the QueG family.</text>
</comment>
<sequence>MTPQPLADNLSPPDPARLAQSIKDWGRELGFQQVGISDVELGEHEAHLQRWLEAGYHGEMDYMAAHGSKRSRPAELVPGTLRVISLRMDYLPGDTRMAQVLATPEKAYVSRYALGRDYHKLIRKRLQQLAERIQAEVGPFGFRAFVDSAPVLEKAIAEQAGLGWIGKNTLVLNRKAGSYFFLGELFVDMPLPVDPAMDSEHCGRCSACLDICPTAAFVGPYRLDARRCISYLTIEYKGAIPLELRPLIGNRVFGCDDCQIVCPWNRFARPTGQGDFQPRHSLDNAELAELFLWSEEEFLGRTEGSPLRRAGYERWLRNLAVGLGNAPSTIPVLEALKARRGFPSELVREHVEWALRRHGET</sequence>
<organism>
    <name type="scientific">Pseudomonas aeruginosa (strain ATCC 15692 / DSM 22644 / CIP 104116 / JCM 14847 / LMG 12228 / 1C / PRS 101 / PAO1)</name>
    <dbReference type="NCBI Taxonomy" id="208964"/>
    <lineage>
        <taxon>Bacteria</taxon>
        <taxon>Pseudomonadati</taxon>
        <taxon>Pseudomonadota</taxon>
        <taxon>Gammaproteobacteria</taxon>
        <taxon>Pseudomonadales</taxon>
        <taxon>Pseudomonadaceae</taxon>
        <taxon>Pseudomonas</taxon>
    </lineage>
</organism>